<feature type="chain" id="PRO_0000276750" description="Probable quinol oxidase subunit 1">
    <location>
        <begin position="1"/>
        <end position="662"/>
    </location>
</feature>
<feature type="transmembrane region" description="Helical" evidence="2">
    <location>
        <begin position="14"/>
        <end position="34"/>
    </location>
</feature>
<feature type="transmembrane region" description="Helical" evidence="2">
    <location>
        <begin position="56"/>
        <end position="76"/>
    </location>
</feature>
<feature type="transmembrane region" description="Helical" evidence="2">
    <location>
        <begin position="103"/>
        <end position="123"/>
    </location>
</feature>
<feature type="transmembrane region" description="Helical" evidence="2">
    <location>
        <begin position="140"/>
        <end position="160"/>
    </location>
</feature>
<feature type="transmembrane region" description="Helical" evidence="2">
    <location>
        <begin position="187"/>
        <end position="207"/>
    </location>
</feature>
<feature type="transmembrane region" description="Helical" evidence="2">
    <location>
        <begin position="228"/>
        <end position="248"/>
    </location>
</feature>
<feature type="transmembrane region" description="Helical" evidence="2">
    <location>
        <begin position="273"/>
        <end position="293"/>
    </location>
</feature>
<feature type="transmembrane region" description="Helical" evidence="2">
    <location>
        <begin position="311"/>
        <end position="331"/>
    </location>
</feature>
<feature type="transmembrane region" description="Helical" evidence="2">
    <location>
        <begin position="336"/>
        <end position="356"/>
    </location>
</feature>
<feature type="transmembrane region" description="Helical" evidence="2">
    <location>
        <begin position="376"/>
        <end position="396"/>
    </location>
</feature>
<feature type="transmembrane region" description="Helical" evidence="2">
    <location>
        <begin position="415"/>
        <end position="435"/>
    </location>
</feature>
<feature type="transmembrane region" description="Helical" evidence="2">
    <location>
        <begin position="451"/>
        <end position="471"/>
    </location>
</feature>
<feature type="transmembrane region" description="Helical" evidence="2">
    <location>
        <begin position="492"/>
        <end position="512"/>
    </location>
</feature>
<feature type="transmembrane region" description="Helical" evidence="2">
    <location>
        <begin position="587"/>
        <end position="604"/>
    </location>
</feature>
<feature type="transmembrane region" description="Helical" evidence="2">
    <location>
        <begin position="608"/>
        <end position="627"/>
    </location>
</feature>
<feature type="binding site" description="axial binding residue" evidence="1">
    <location>
        <position position="102"/>
    </location>
    <ligand>
        <name>Fe(II)-heme a</name>
        <dbReference type="ChEBI" id="CHEBI:61715"/>
    </ligand>
    <ligandPart>
        <name>Fe</name>
        <dbReference type="ChEBI" id="CHEBI:18248"/>
    </ligandPart>
</feature>
<feature type="binding site" evidence="1">
    <location>
        <position position="279"/>
    </location>
    <ligand>
        <name>Cu cation</name>
        <dbReference type="ChEBI" id="CHEBI:23378"/>
        <label>B</label>
    </ligand>
</feature>
<feature type="binding site" evidence="1">
    <location>
        <position position="283"/>
    </location>
    <ligand>
        <name>Cu cation</name>
        <dbReference type="ChEBI" id="CHEBI:23378"/>
        <label>B</label>
    </ligand>
</feature>
<feature type="binding site" evidence="1">
    <location>
        <position position="328"/>
    </location>
    <ligand>
        <name>Cu cation</name>
        <dbReference type="ChEBI" id="CHEBI:23378"/>
        <label>B</label>
    </ligand>
</feature>
<feature type="binding site" evidence="1">
    <location>
        <position position="329"/>
    </location>
    <ligand>
        <name>Cu cation</name>
        <dbReference type="ChEBI" id="CHEBI:23378"/>
        <label>B</label>
    </ligand>
</feature>
<feature type="binding site" description="axial binding residue" evidence="1">
    <location>
        <position position="414"/>
    </location>
    <ligand>
        <name>heme a3</name>
        <dbReference type="ChEBI" id="CHEBI:83282"/>
    </ligand>
    <ligandPart>
        <name>Fe</name>
        <dbReference type="ChEBI" id="CHEBI:18248"/>
    </ligandPart>
</feature>
<feature type="binding site" description="axial binding residue" evidence="1">
    <location>
        <position position="416"/>
    </location>
    <ligand>
        <name>Fe(II)-heme a</name>
        <dbReference type="ChEBI" id="CHEBI:61715"/>
    </ligand>
    <ligandPart>
        <name>Fe</name>
        <dbReference type="ChEBI" id="CHEBI:18248"/>
    </ligandPart>
</feature>
<feature type="cross-link" description="1'-histidyl-3'-tyrosine (His-Tyr)" evidence="1">
    <location>
        <begin position="279"/>
        <end position="283"/>
    </location>
</feature>
<comment type="function">
    <text evidence="1">Catalyzes quinol oxidation with the concomitant reduction of oxygen to water.</text>
</comment>
<comment type="catalytic activity">
    <reaction>
        <text>2 a quinol + O2 = 2 a quinone + 2 H2O</text>
        <dbReference type="Rhea" id="RHEA:55376"/>
        <dbReference type="ChEBI" id="CHEBI:15377"/>
        <dbReference type="ChEBI" id="CHEBI:15379"/>
        <dbReference type="ChEBI" id="CHEBI:24646"/>
        <dbReference type="ChEBI" id="CHEBI:132124"/>
    </reaction>
</comment>
<comment type="cofactor">
    <cofactor evidence="1">
        <name>Cu cation</name>
        <dbReference type="ChEBI" id="CHEBI:23378"/>
    </cofactor>
    <text evidence="1">Binds a copper B center.</text>
</comment>
<comment type="cofactor">
    <cofactor evidence="1">
        <name>ferriheme a</name>
        <dbReference type="ChEBI" id="CHEBI:60532"/>
    </cofactor>
</comment>
<comment type="cofactor">
    <text evidence="1">Heme A3.</text>
</comment>
<comment type="pathway">
    <text>Energy metabolism; oxidative phosphorylation.</text>
</comment>
<comment type="subcellular location">
    <subcellularLocation>
        <location evidence="1">Cell membrane</location>
        <topology evidence="1">Multi-pass membrane protein</topology>
    </subcellularLocation>
</comment>
<comment type="similarity">
    <text evidence="3">Belongs to the heme-copper respiratory oxidase family.</text>
</comment>
<proteinExistence type="inferred from homology"/>
<reference key="1">
    <citation type="journal article" date="2003" name="Mol. Microbiol.">
        <title>Genome-based analysis of virulence genes in a non-biofilm-forming Staphylococcus epidermidis strain (ATCC 12228).</title>
        <authorList>
            <person name="Zhang Y.-Q."/>
            <person name="Ren S.-X."/>
            <person name="Li H.-L."/>
            <person name="Wang Y.-X."/>
            <person name="Fu G."/>
            <person name="Yang J."/>
            <person name="Qin Z.-Q."/>
            <person name="Miao Y.-G."/>
            <person name="Wang W.-Y."/>
            <person name="Chen R.-S."/>
            <person name="Shen Y."/>
            <person name="Chen Z."/>
            <person name="Yuan Z.-H."/>
            <person name="Zhao G.-P."/>
            <person name="Qu D."/>
            <person name="Danchin A."/>
            <person name="Wen Y.-M."/>
        </authorList>
    </citation>
    <scope>NUCLEOTIDE SEQUENCE [LARGE SCALE GENOMIC DNA]</scope>
    <source>
        <strain>ATCC 12228 / FDA PCI 1200</strain>
    </source>
</reference>
<accession>Q8CPP7</accession>
<dbReference type="EC" id="1.10.3.-"/>
<dbReference type="EMBL" id="AE015929">
    <property type="protein sequence ID" value="AAO04355.1"/>
    <property type="molecule type" value="Genomic_DNA"/>
</dbReference>
<dbReference type="RefSeq" id="NP_764313.1">
    <property type="nucleotide sequence ID" value="NC_004461.1"/>
</dbReference>
<dbReference type="RefSeq" id="WP_001831713.1">
    <property type="nucleotide sequence ID" value="NZ_WBME01000028.1"/>
</dbReference>
<dbReference type="SMR" id="Q8CPP7"/>
<dbReference type="GeneID" id="50019102"/>
<dbReference type="KEGG" id="sep:SE_0758"/>
<dbReference type="PATRIC" id="fig|176280.10.peg.730"/>
<dbReference type="eggNOG" id="COG0843">
    <property type="taxonomic scope" value="Bacteria"/>
</dbReference>
<dbReference type="HOGENOM" id="CLU_011899_7_1_9"/>
<dbReference type="OrthoDB" id="9759913at2"/>
<dbReference type="UniPathway" id="UPA00705"/>
<dbReference type="Proteomes" id="UP000001411">
    <property type="component" value="Chromosome"/>
</dbReference>
<dbReference type="GO" id="GO:0005886">
    <property type="term" value="C:plasma membrane"/>
    <property type="evidence" value="ECO:0007669"/>
    <property type="project" value="UniProtKB-SubCell"/>
</dbReference>
<dbReference type="GO" id="GO:0005507">
    <property type="term" value="F:copper ion binding"/>
    <property type="evidence" value="ECO:0007669"/>
    <property type="project" value="InterPro"/>
</dbReference>
<dbReference type="GO" id="GO:0004129">
    <property type="term" value="F:cytochrome-c oxidase activity"/>
    <property type="evidence" value="ECO:0007669"/>
    <property type="project" value="InterPro"/>
</dbReference>
<dbReference type="GO" id="GO:0020037">
    <property type="term" value="F:heme binding"/>
    <property type="evidence" value="ECO:0007669"/>
    <property type="project" value="InterPro"/>
</dbReference>
<dbReference type="GO" id="GO:0016682">
    <property type="term" value="F:oxidoreductase activity, acting on diphenols and related substances as donors, oxygen as acceptor"/>
    <property type="evidence" value="ECO:0007669"/>
    <property type="project" value="InterPro"/>
</dbReference>
<dbReference type="GO" id="GO:0015990">
    <property type="term" value="P:electron transport coupled proton transport"/>
    <property type="evidence" value="ECO:0007669"/>
    <property type="project" value="TreeGrafter"/>
</dbReference>
<dbReference type="GO" id="GO:0006119">
    <property type="term" value="P:oxidative phosphorylation"/>
    <property type="evidence" value="ECO:0007669"/>
    <property type="project" value="UniProtKB-UniPathway"/>
</dbReference>
<dbReference type="GO" id="GO:0022904">
    <property type="term" value="P:respiratory electron transport chain"/>
    <property type="evidence" value="ECO:0007669"/>
    <property type="project" value="TreeGrafter"/>
</dbReference>
<dbReference type="CDD" id="cd01662">
    <property type="entry name" value="Ubiquinol_Oxidase_I"/>
    <property type="match status" value="1"/>
</dbReference>
<dbReference type="FunFam" id="1.20.210.10:FF:000002">
    <property type="entry name" value="Cytochrome o ubiquinol oxidase, subunit I"/>
    <property type="match status" value="1"/>
</dbReference>
<dbReference type="Gene3D" id="1.20.210.10">
    <property type="entry name" value="Cytochrome c oxidase-like, subunit I domain"/>
    <property type="match status" value="1"/>
</dbReference>
<dbReference type="InterPro" id="IPR023616">
    <property type="entry name" value="Cyt_c_oxase-like_su1_dom"/>
</dbReference>
<dbReference type="InterPro" id="IPR036927">
    <property type="entry name" value="Cyt_c_oxase-like_su1_sf"/>
</dbReference>
<dbReference type="InterPro" id="IPR000883">
    <property type="entry name" value="Cyt_C_Oxase_1"/>
</dbReference>
<dbReference type="InterPro" id="IPR023615">
    <property type="entry name" value="Cyt_c_Oxase_su1_BS"/>
</dbReference>
<dbReference type="InterPro" id="IPR014233">
    <property type="entry name" value="QoxB"/>
</dbReference>
<dbReference type="NCBIfam" id="TIGR02882">
    <property type="entry name" value="QoxB"/>
    <property type="match status" value="1"/>
</dbReference>
<dbReference type="PANTHER" id="PTHR10422:SF35">
    <property type="entry name" value="CYTOCHROME BO(3) UBIQUINOL OXIDASE SUBUNIT 1"/>
    <property type="match status" value="1"/>
</dbReference>
<dbReference type="PANTHER" id="PTHR10422">
    <property type="entry name" value="CYTOCHROME C OXIDASE SUBUNIT 1"/>
    <property type="match status" value="1"/>
</dbReference>
<dbReference type="Pfam" id="PF00115">
    <property type="entry name" value="COX1"/>
    <property type="match status" value="1"/>
</dbReference>
<dbReference type="PRINTS" id="PR01165">
    <property type="entry name" value="CYCOXIDASEI"/>
</dbReference>
<dbReference type="SUPFAM" id="SSF81442">
    <property type="entry name" value="Cytochrome c oxidase subunit I-like"/>
    <property type="match status" value="1"/>
</dbReference>
<dbReference type="PROSITE" id="PS50855">
    <property type="entry name" value="COX1"/>
    <property type="match status" value="1"/>
</dbReference>
<dbReference type="PROSITE" id="PS00077">
    <property type="entry name" value="COX1_CUB"/>
    <property type="match status" value="1"/>
</dbReference>
<gene>
    <name type="primary">qoxB</name>
    <name type="ordered locus">SE_0758</name>
</gene>
<organism>
    <name type="scientific">Staphylococcus epidermidis (strain ATCC 12228 / FDA PCI 1200)</name>
    <dbReference type="NCBI Taxonomy" id="176280"/>
    <lineage>
        <taxon>Bacteria</taxon>
        <taxon>Bacillati</taxon>
        <taxon>Bacillota</taxon>
        <taxon>Bacilli</taxon>
        <taxon>Bacillales</taxon>
        <taxon>Staphylococcaceae</taxon>
        <taxon>Staphylococcus</taxon>
    </lineage>
</organism>
<sequence length="662" mass="75267">MNFPWDQLLVKGNWMIISAQIAAPFLVIGLIAVISYFKLWKYLYKEWFTSVDHKKIGIMYLISAVLMFVRGGIDALMLRTQLTIPDNKFLEANHYNEVFTTHGVIMIIFMAMPFIFGLWNVVIPLQLGARDVAFPVMNNVSFWLFFAGMILFNLSFIVGGSPAAGWTNYAPLAGEFSPGPGVNYYLIAIQISGIGSLMTGINFFVTILRCKTPTMKFMQMPMFSVTTFITTLIVILAFPVFTVALALMTADRIFGTQFFTVANGGMPMLWANFFWVWGHPEVYIVILPAFGMYSEIIPTFARKRLFGHQSMIWATAGIAFLSFLVWVHHFFTMGNGALINSFFSISTMLIGVPTGVKLFNWLLTLYKGRITFESPMLFSLAFIPNFLLGGVTGVMLAMASADYQYHNTYFLVAHFHYTLVTGVVFACLAGLIFWYPKMMGYKLNETLNKWCFWFFMIGFNVCFLPQFILGLDGMPRRLYTYMPSDGWWLLNFISTIGAVLMAIGFLFLVASIVYSHIKAPREATGDNWDGLGRTLEWSTASAIPPKYNFAITPDWNDYDTFVDMKEHGRHYLDNHNYKDIHMPNNTPVGFWMGIFMTIGGFFLIFESIVPALICLAGIFITMIWRSFQIDHGYHIPASEVAETEARLREARIKEREAVSHES</sequence>
<evidence type="ECO:0000250" key="1"/>
<evidence type="ECO:0000255" key="2"/>
<evidence type="ECO:0000305" key="3"/>
<protein>
    <recommendedName>
        <fullName>Probable quinol oxidase subunit 1</fullName>
        <ecNumber>1.10.3.-</ecNumber>
    </recommendedName>
    <alternativeName>
        <fullName>Quinol oxidase polypeptide I</fullName>
    </alternativeName>
</protein>
<keyword id="KW-1003">Cell membrane</keyword>
<keyword id="KW-0186">Copper</keyword>
<keyword id="KW-0249">Electron transport</keyword>
<keyword id="KW-0349">Heme</keyword>
<keyword id="KW-0375">Hydrogen ion transport</keyword>
<keyword id="KW-0406">Ion transport</keyword>
<keyword id="KW-0408">Iron</keyword>
<keyword id="KW-0472">Membrane</keyword>
<keyword id="KW-0479">Metal-binding</keyword>
<keyword id="KW-0560">Oxidoreductase</keyword>
<keyword id="KW-0679">Respiratory chain</keyword>
<keyword id="KW-0812">Transmembrane</keyword>
<keyword id="KW-1133">Transmembrane helix</keyword>
<keyword id="KW-0813">Transport</keyword>
<name>QOX1_STAES</name>